<dbReference type="EMBL" id="AK161617">
    <property type="protein sequence ID" value="BAE36495.1"/>
    <property type="molecule type" value="mRNA"/>
</dbReference>
<dbReference type="EMBL" id="AK146429">
    <property type="protein sequence ID" value="BAE27163.1"/>
    <property type="molecule type" value="mRNA"/>
</dbReference>
<dbReference type="EMBL" id="BC002306">
    <property type="protein sequence ID" value="AAH02306.1"/>
    <property type="molecule type" value="mRNA"/>
</dbReference>
<dbReference type="EMBL" id="BC092087">
    <property type="protein sequence ID" value="AAH92087.1"/>
    <property type="molecule type" value="mRNA"/>
</dbReference>
<dbReference type="EMBL" id="BC125612">
    <property type="protein sequence ID" value="AAI25613.1"/>
    <property type="molecule type" value="mRNA"/>
</dbReference>
<dbReference type="EMBL" id="BC125638">
    <property type="protein sequence ID" value="AAI25639.1"/>
    <property type="molecule type" value="mRNA"/>
</dbReference>
<dbReference type="CCDS" id="CCDS28058.1"/>
<dbReference type="RefSeq" id="NP_663607.1">
    <property type="nucleotide sequence ID" value="NM_145632.3"/>
</dbReference>
<dbReference type="BMRB" id="Q923G2"/>
<dbReference type="SMR" id="Q923G2"/>
<dbReference type="BioGRID" id="232836">
    <property type="interactions" value="6"/>
</dbReference>
<dbReference type="FunCoup" id="Q923G2">
    <property type="interactions" value="2572"/>
</dbReference>
<dbReference type="IntAct" id="Q923G2">
    <property type="interactions" value="4"/>
</dbReference>
<dbReference type="MINT" id="Q923G2"/>
<dbReference type="STRING" id="10090.ENSMUSP00000021405"/>
<dbReference type="GlyGen" id="Q923G2">
    <property type="glycosylation" value="1 site, 1 O-linked glycan (1 site)"/>
</dbReference>
<dbReference type="iPTMnet" id="Q923G2"/>
<dbReference type="PhosphoSitePlus" id="Q923G2"/>
<dbReference type="SwissPalm" id="Q923G2"/>
<dbReference type="PaxDb" id="10090-ENSMUSP00000021405"/>
<dbReference type="PeptideAtlas" id="Q923G2"/>
<dbReference type="ProteomicsDB" id="300513"/>
<dbReference type="Pumba" id="Q923G2"/>
<dbReference type="Antibodypedia" id="33820">
    <property type="antibodies" value="286 antibodies from 31 providers"/>
</dbReference>
<dbReference type="DNASU" id="245841"/>
<dbReference type="Ensembl" id="ENSMUST00000021405.8">
    <property type="protein sequence ID" value="ENSMUSP00000021405.8"/>
    <property type="gene ID" value="ENSMUSG00000021018.9"/>
</dbReference>
<dbReference type="GeneID" id="245841"/>
<dbReference type="KEGG" id="mmu:245841"/>
<dbReference type="UCSC" id="uc007yqz.1">
    <property type="organism name" value="mouse"/>
</dbReference>
<dbReference type="AGR" id="MGI:2384309"/>
<dbReference type="CTD" id="5437"/>
<dbReference type="MGI" id="MGI:2384309">
    <property type="gene designation" value="Polr2h"/>
</dbReference>
<dbReference type="VEuPathDB" id="HostDB:ENSMUSG00000021018"/>
<dbReference type="eggNOG" id="KOG3400">
    <property type="taxonomic scope" value="Eukaryota"/>
</dbReference>
<dbReference type="GeneTree" id="ENSGT00390000018195"/>
<dbReference type="HOGENOM" id="CLU_103864_1_1_1"/>
<dbReference type="InParanoid" id="Q923G2"/>
<dbReference type="OMA" id="KEDDKGW"/>
<dbReference type="OrthoDB" id="10249565at2759"/>
<dbReference type="PhylomeDB" id="Q923G2"/>
<dbReference type="TreeFam" id="TF103043"/>
<dbReference type="Reactome" id="R-MMU-112382">
    <property type="pathway name" value="Formation of RNA Pol II elongation complex"/>
</dbReference>
<dbReference type="Reactome" id="R-MMU-113418">
    <property type="pathway name" value="Formation of the Early Elongation Complex"/>
</dbReference>
<dbReference type="Reactome" id="R-MMU-5250924">
    <property type="pathway name" value="B-WICH complex positively regulates rRNA expression"/>
</dbReference>
<dbReference type="Reactome" id="R-MMU-674695">
    <property type="pathway name" value="RNA Polymerase II Pre-transcription Events"/>
</dbReference>
<dbReference type="Reactome" id="R-MMU-6781823">
    <property type="pathway name" value="Formation of TC-NER Pre-Incision Complex"/>
</dbReference>
<dbReference type="Reactome" id="R-MMU-6782135">
    <property type="pathway name" value="Dual incision in TC-NER"/>
</dbReference>
<dbReference type="Reactome" id="R-MMU-6782210">
    <property type="pathway name" value="Gap-filling DNA repair synthesis and ligation in TC-NER"/>
</dbReference>
<dbReference type="Reactome" id="R-MMU-6796648">
    <property type="pathway name" value="TP53 Regulates Transcription of DNA Repair Genes"/>
</dbReference>
<dbReference type="Reactome" id="R-MMU-6803529">
    <property type="pathway name" value="FGFR2 alternative splicing"/>
</dbReference>
<dbReference type="Reactome" id="R-MMU-6807505">
    <property type="pathway name" value="RNA polymerase II transcribes snRNA genes"/>
</dbReference>
<dbReference type="Reactome" id="R-MMU-72086">
    <property type="pathway name" value="mRNA Capping"/>
</dbReference>
<dbReference type="Reactome" id="R-MMU-72163">
    <property type="pathway name" value="mRNA Splicing - Major Pathway"/>
</dbReference>
<dbReference type="Reactome" id="R-MMU-72165">
    <property type="pathway name" value="mRNA Splicing - Minor Pathway"/>
</dbReference>
<dbReference type="Reactome" id="R-MMU-72203">
    <property type="pathway name" value="Processing of Capped Intron-Containing Pre-mRNA"/>
</dbReference>
<dbReference type="Reactome" id="R-MMU-73762">
    <property type="pathway name" value="RNA Polymerase I Transcription Initiation"/>
</dbReference>
<dbReference type="Reactome" id="R-MMU-73772">
    <property type="pathway name" value="RNA Polymerase I Promoter Escape"/>
</dbReference>
<dbReference type="Reactome" id="R-MMU-73776">
    <property type="pathway name" value="RNA Polymerase II Promoter Escape"/>
</dbReference>
<dbReference type="Reactome" id="R-MMU-73779">
    <property type="pathway name" value="RNA Polymerase II Transcription Pre-Initiation And Promoter Opening"/>
</dbReference>
<dbReference type="Reactome" id="R-MMU-73863">
    <property type="pathway name" value="RNA Polymerase I Transcription Termination"/>
</dbReference>
<dbReference type="Reactome" id="R-MMU-75953">
    <property type="pathway name" value="RNA Polymerase II Transcription Initiation"/>
</dbReference>
<dbReference type="Reactome" id="R-MMU-75955">
    <property type="pathway name" value="RNA Polymerase II Transcription Elongation"/>
</dbReference>
<dbReference type="Reactome" id="R-MMU-76042">
    <property type="pathway name" value="RNA Polymerase II Transcription Initiation And Promoter Clearance"/>
</dbReference>
<dbReference type="Reactome" id="R-MMU-76061">
    <property type="pathway name" value="RNA Polymerase III Transcription Initiation From Type 1 Promoter"/>
</dbReference>
<dbReference type="Reactome" id="R-MMU-76066">
    <property type="pathway name" value="RNA Polymerase III Transcription Initiation From Type 2 Promoter"/>
</dbReference>
<dbReference type="Reactome" id="R-MMU-76071">
    <property type="pathway name" value="RNA Polymerase III Transcription Initiation From Type 3 Promoter"/>
</dbReference>
<dbReference type="Reactome" id="R-MMU-77075">
    <property type="pathway name" value="RNA Pol II CTD phosphorylation and interaction with CE"/>
</dbReference>
<dbReference type="Reactome" id="R-MMU-9018519">
    <property type="pathway name" value="Estrogen-dependent gene expression"/>
</dbReference>
<dbReference type="BioGRID-ORCS" id="245841">
    <property type="hits" value="30 hits in 78 CRISPR screens"/>
</dbReference>
<dbReference type="ChiTaRS" id="Polr2h">
    <property type="organism name" value="mouse"/>
</dbReference>
<dbReference type="PRO" id="PR:Q923G2"/>
<dbReference type="Proteomes" id="UP000000589">
    <property type="component" value="Chromosome 16"/>
</dbReference>
<dbReference type="RNAct" id="Q923G2">
    <property type="molecule type" value="protein"/>
</dbReference>
<dbReference type="Bgee" id="ENSMUSG00000021018">
    <property type="expression patterns" value="Expressed in epiblast (generic) and 95 other cell types or tissues"/>
</dbReference>
<dbReference type="ExpressionAtlas" id="Q923G2">
    <property type="expression patterns" value="baseline and differential"/>
</dbReference>
<dbReference type="GO" id="GO:0005654">
    <property type="term" value="C:nucleoplasm"/>
    <property type="evidence" value="ECO:0000304"/>
    <property type="project" value="Reactome"/>
</dbReference>
<dbReference type="GO" id="GO:0005634">
    <property type="term" value="C:nucleus"/>
    <property type="evidence" value="ECO:0000250"/>
    <property type="project" value="UniProtKB"/>
</dbReference>
<dbReference type="GO" id="GO:0032993">
    <property type="term" value="C:protein-DNA complex"/>
    <property type="evidence" value="ECO:0007669"/>
    <property type="project" value="Ensembl"/>
</dbReference>
<dbReference type="GO" id="GO:0005736">
    <property type="term" value="C:RNA polymerase I complex"/>
    <property type="evidence" value="ECO:0007669"/>
    <property type="project" value="Ensembl"/>
</dbReference>
<dbReference type="GO" id="GO:0005665">
    <property type="term" value="C:RNA polymerase II, core complex"/>
    <property type="evidence" value="ECO:0000250"/>
    <property type="project" value="UniProtKB"/>
</dbReference>
<dbReference type="GO" id="GO:0005666">
    <property type="term" value="C:RNA polymerase III complex"/>
    <property type="evidence" value="ECO:0007669"/>
    <property type="project" value="Ensembl"/>
</dbReference>
<dbReference type="GO" id="GO:0003899">
    <property type="term" value="F:DNA-directed RNA polymerase activity"/>
    <property type="evidence" value="ECO:0007669"/>
    <property type="project" value="InterPro"/>
</dbReference>
<dbReference type="GO" id="GO:0003697">
    <property type="term" value="F:single-stranded DNA binding"/>
    <property type="evidence" value="ECO:0007669"/>
    <property type="project" value="Ensembl"/>
</dbReference>
<dbReference type="GO" id="GO:0006366">
    <property type="term" value="P:transcription by RNA polymerase II"/>
    <property type="evidence" value="ECO:0000250"/>
    <property type="project" value="UniProtKB"/>
</dbReference>
<dbReference type="FunFam" id="2.40.50.140:FF:000073">
    <property type="entry name" value="DNA-directed RNA polymerases I, II, and III subunit RPABC3"/>
    <property type="match status" value="1"/>
</dbReference>
<dbReference type="Gene3D" id="2.40.50.140">
    <property type="entry name" value="Nucleic acid-binding proteins"/>
    <property type="match status" value="1"/>
</dbReference>
<dbReference type="InterPro" id="IPR012340">
    <property type="entry name" value="NA-bd_OB-fold"/>
</dbReference>
<dbReference type="InterPro" id="IPR005570">
    <property type="entry name" value="RPABC3"/>
</dbReference>
<dbReference type="PANTHER" id="PTHR10917">
    <property type="entry name" value="DNA-DIRECTED RNA POLYMERASES I, II, AND III SUBUNIT RPABC3"/>
    <property type="match status" value="1"/>
</dbReference>
<dbReference type="PANTHER" id="PTHR10917:SF0">
    <property type="entry name" value="DNA-DIRECTED RNA POLYMERASES I, II, AND III SUBUNIT RPABC3"/>
    <property type="match status" value="1"/>
</dbReference>
<dbReference type="Pfam" id="PF03870">
    <property type="entry name" value="RNA_pol_Rpb8"/>
    <property type="match status" value="1"/>
</dbReference>
<dbReference type="PIRSF" id="PIRSF000779">
    <property type="entry name" value="RNA_pol_Rpb8"/>
    <property type="match status" value="1"/>
</dbReference>
<dbReference type="SMART" id="SM00658">
    <property type="entry name" value="RPOL8c"/>
    <property type="match status" value="1"/>
</dbReference>
<dbReference type="SUPFAM" id="SSF50249">
    <property type="entry name" value="Nucleic acid-binding proteins"/>
    <property type="match status" value="1"/>
</dbReference>
<gene>
    <name type="primary">Polr2h</name>
</gene>
<comment type="function">
    <text evidence="2">DNA-dependent RNA polymerase catalyzes the transcription of DNA into RNA using the four ribonucleoside triphosphates as substrates. Common component of RNA polymerases I, II and III which synthesize ribosomal RNA precursors, mRNA precursors and many functional non-coding RNAs, and small RNAs, such as 5S rRNA and tRNAs, respectively.</text>
</comment>
<comment type="subunit">
    <text evidence="2">Component of the RNA polymerase I (Pol I), RNA polymerase II (Pol II) and RNA polymerase III (Pol III) complexes consisting of at least 13, 12 and 17 subunits, respectively (By similarity). Pol I complex consists of a ten-subunit catalytic core composed of POLR1A/RPA1, POLR1B/RPA2, POLR1C/RPAC1, POLR1D/RPAC2, POLR1H/RPA12, POLR2E/RPABC1, POLR2F/RPABC2, POLR2H/RPABC3, POLR2K/RPABC4 and POLR2L/RPABC5; a mobile stalk subunit POLR1F/RPA43 protruding from the core and additional subunits homologous to general transcription factors POLR1E/RPA49 and POLR1G/RPA34. Part of Pol I pre-initiation complex (PIC), in which Pol I core assembles with RRN3 and promoter-bound UTBF and SL1/TIF-IB complex (By similarity). Pol II complex contains a ten-subunit catalytic core composed of POLR2A/RPB1, POLR2B/RPB2, POLR2C/RPB3, POLR2I/RPB9, POLR2J/RPB11, POLR2E/RPABC1, POLR2F/RPABC2, POLR2H/RPABC3, POLR2K/RPABC4 and POLR2L/RPABC5 and a mobile stalk composed of two subunits POLR2D/RPB4 and POLR2G/RPB7. Part of Pol II(G) complex, in which Pol II core associates with an additional subunit POLR2M; unlike conventional Pol II, Pol II(G) functions as a transcriptional repressor. Part of TBP-based Pol II pre-initiation complex (PIC), in which Pol II core assembles with general transcription factors and other specific initiation factors including GTF2E1, GTF2E2, GTF2F1, GTF2F2, TCEA1, ERCC2, ERCC3, GTF2H2, GTF2H3, GTF2H4, GTF2H5, GTF2A1, GTF2A2, GTF2B and TBP; this large multi-subunit PIC complex mediates DNA unwinding and targets Pol II core to the transcription start site where the first phosphodiester bond forms. Directly interacts with POLR2A. Pol III complex consists of a ten-subunit catalytic core composed of POLR3A/RPC1, POLR3B/RPC2, POLR1C/RPAC1, POLR1D/RPAC2, POLR3K/RPC10, POLR2E/RPABC1, POLR2F/RPABC2, POLR2H/RPABC3, POLR2K/RPABC4 and POLR2L/RPABC5; a mobile stalk composed of two subunits POLR3H/RPC8 and CRCP/RPC9, protruding from the core and functioning primarily in transcription initiation; and additional subunits homologous to general transcription factors of the RNA polymerase II machinery, POLR3C/RPC3-POLR3F/RPC6-POLR3G/RPC7 heterotrimer required for transcription initiation and POLR3D/RPC4-POLR3E/RPC5 heterodimer involved in both transcription initiation and termination.</text>
</comment>
<comment type="subcellular location">
    <subcellularLocation>
        <location evidence="2">Nucleus</location>
    </subcellularLocation>
    <subcellularLocation>
        <location evidence="2">Nucleus</location>
        <location evidence="2">Nucleolus</location>
    </subcellularLocation>
</comment>
<comment type="similarity">
    <text evidence="3">Belongs to the eukaryotic RPB8 RNA polymerase subunit family.</text>
</comment>
<organism>
    <name type="scientific">Mus musculus</name>
    <name type="common">Mouse</name>
    <dbReference type="NCBI Taxonomy" id="10090"/>
    <lineage>
        <taxon>Eukaryota</taxon>
        <taxon>Metazoa</taxon>
        <taxon>Chordata</taxon>
        <taxon>Craniata</taxon>
        <taxon>Vertebrata</taxon>
        <taxon>Euteleostomi</taxon>
        <taxon>Mammalia</taxon>
        <taxon>Eutheria</taxon>
        <taxon>Euarchontoglires</taxon>
        <taxon>Glires</taxon>
        <taxon>Rodentia</taxon>
        <taxon>Myomorpha</taxon>
        <taxon>Muroidea</taxon>
        <taxon>Muridae</taxon>
        <taxon>Murinae</taxon>
        <taxon>Mus</taxon>
        <taxon>Mus</taxon>
    </lineage>
</organism>
<accession>Q923G2</accession>
<accession>Q3TT30</accession>
<proteinExistence type="evidence at protein level"/>
<protein>
    <recommendedName>
        <fullName>DNA-directed RNA polymerases I, II, and III subunit RPABC3</fullName>
        <shortName>RNA polymerases I, II, and III subunit ABC3</shortName>
    </recommendedName>
    <alternativeName>
        <fullName>DNA-directed RNA polymerase II subunit H</fullName>
    </alternativeName>
    <alternativeName>
        <fullName>RPB17</fullName>
    </alternativeName>
    <alternativeName>
        <fullName>RPB8 homolog</fullName>
    </alternativeName>
</protein>
<reference key="1">
    <citation type="journal article" date="2005" name="Science">
        <title>The transcriptional landscape of the mammalian genome.</title>
        <authorList>
            <person name="Carninci P."/>
            <person name="Kasukawa T."/>
            <person name="Katayama S."/>
            <person name="Gough J."/>
            <person name="Frith M.C."/>
            <person name="Maeda N."/>
            <person name="Oyama R."/>
            <person name="Ravasi T."/>
            <person name="Lenhard B."/>
            <person name="Wells C."/>
            <person name="Kodzius R."/>
            <person name="Shimokawa K."/>
            <person name="Bajic V.B."/>
            <person name="Brenner S.E."/>
            <person name="Batalov S."/>
            <person name="Forrest A.R."/>
            <person name="Zavolan M."/>
            <person name="Davis M.J."/>
            <person name="Wilming L.G."/>
            <person name="Aidinis V."/>
            <person name="Allen J.E."/>
            <person name="Ambesi-Impiombato A."/>
            <person name="Apweiler R."/>
            <person name="Aturaliya R.N."/>
            <person name="Bailey T.L."/>
            <person name="Bansal M."/>
            <person name="Baxter L."/>
            <person name="Beisel K.W."/>
            <person name="Bersano T."/>
            <person name="Bono H."/>
            <person name="Chalk A.M."/>
            <person name="Chiu K.P."/>
            <person name="Choudhary V."/>
            <person name="Christoffels A."/>
            <person name="Clutterbuck D.R."/>
            <person name="Crowe M.L."/>
            <person name="Dalla E."/>
            <person name="Dalrymple B.P."/>
            <person name="de Bono B."/>
            <person name="Della Gatta G."/>
            <person name="di Bernardo D."/>
            <person name="Down T."/>
            <person name="Engstrom P."/>
            <person name="Fagiolini M."/>
            <person name="Faulkner G."/>
            <person name="Fletcher C.F."/>
            <person name="Fukushima T."/>
            <person name="Furuno M."/>
            <person name="Futaki S."/>
            <person name="Gariboldi M."/>
            <person name="Georgii-Hemming P."/>
            <person name="Gingeras T.R."/>
            <person name="Gojobori T."/>
            <person name="Green R.E."/>
            <person name="Gustincich S."/>
            <person name="Harbers M."/>
            <person name="Hayashi Y."/>
            <person name="Hensch T.K."/>
            <person name="Hirokawa N."/>
            <person name="Hill D."/>
            <person name="Huminiecki L."/>
            <person name="Iacono M."/>
            <person name="Ikeo K."/>
            <person name="Iwama A."/>
            <person name="Ishikawa T."/>
            <person name="Jakt M."/>
            <person name="Kanapin A."/>
            <person name="Katoh M."/>
            <person name="Kawasawa Y."/>
            <person name="Kelso J."/>
            <person name="Kitamura H."/>
            <person name="Kitano H."/>
            <person name="Kollias G."/>
            <person name="Krishnan S.P."/>
            <person name="Kruger A."/>
            <person name="Kummerfeld S.K."/>
            <person name="Kurochkin I.V."/>
            <person name="Lareau L.F."/>
            <person name="Lazarevic D."/>
            <person name="Lipovich L."/>
            <person name="Liu J."/>
            <person name="Liuni S."/>
            <person name="McWilliam S."/>
            <person name="Madan Babu M."/>
            <person name="Madera M."/>
            <person name="Marchionni L."/>
            <person name="Matsuda H."/>
            <person name="Matsuzawa S."/>
            <person name="Miki H."/>
            <person name="Mignone F."/>
            <person name="Miyake S."/>
            <person name="Morris K."/>
            <person name="Mottagui-Tabar S."/>
            <person name="Mulder N."/>
            <person name="Nakano N."/>
            <person name="Nakauchi H."/>
            <person name="Ng P."/>
            <person name="Nilsson R."/>
            <person name="Nishiguchi S."/>
            <person name="Nishikawa S."/>
            <person name="Nori F."/>
            <person name="Ohara O."/>
            <person name="Okazaki Y."/>
            <person name="Orlando V."/>
            <person name="Pang K.C."/>
            <person name="Pavan W.J."/>
            <person name="Pavesi G."/>
            <person name="Pesole G."/>
            <person name="Petrovsky N."/>
            <person name="Piazza S."/>
            <person name="Reed J."/>
            <person name="Reid J.F."/>
            <person name="Ring B.Z."/>
            <person name="Ringwald M."/>
            <person name="Rost B."/>
            <person name="Ruan Y."/>
            <person name="Salzberg S.L."/>
            <person name="Sandelin A."/>
            <person name="Schneider C."/>
            <person name="Schoenbach C."/>
            <person name="Sekiguchi K."/>
            <person name="Semple C.A."/>
            <person name="Seno S."/>
            <person name="Sessa L."/>
            <person name="Sheng Y."/>
            <person name="Shibata Y."/>
            <person name="Shimada H."/>
            <person name="Shimada K."/>
            <person name="Silva D."/>
            <person name="Sinclair B."/>
            <person name="Sperling S."/>
            <person name="Stupka E."/>
            <person name="Sugiura K."/>
            <person name="Sultana R."/>
            <person name="Takenaka Y."/>
            <person name="Taki K."/>
            <person name="Tammoja K."/>
            <person name="Tan S.L."/>
            <person name="Tang S."/>
            <person name="Taylor M.S."/>
            <person name="Tegner J."/>
            <person name="Teichmann S.A."/>
            <person name="Ueda H.R."/>
            <person name="van Nimwegen E."/>
            <person name="Verardo R."/>
            <person name="Wei C.L."/>
            <person name="Yagi K."/>
            <person name="Yamanishi H."/>
            <person name="Zabarovsky E."/>
            <person name="Zhu S."/>
            <person name="Zimmer A."/>
            <person name="Hide W."/>
            <person name="Bult C."/>
            <person name="Grimmond S.M."/>
            <person name="Teasdale R.D."/>
            <person name="Liu E.T."/>
            <person name="Brusic V."/>
            <person name="Quackenbush J."/>
            <person name="Wahlestedt C."/>
            <person name="Mattick J.S."/>
            <person name="Hume D.A."/>
            <person name="Kai C."/>
            <person name="Sasaki D."/>
            <person name="Tomaru Y."/>
            <person name="Fukuda S."/>
            <person name="Kanamori-Katayama M."/>
            <person name="Suzuki M."/>
            <person name="Aoki J."/>
            <person name="Arakawa T."/>
            <person name="Iida J."/>
            <person name="Imamura K."/>
            <person name="Itoh M."/>
            <person name="Kato T."/>
            <person name="Kawaji H."/>
            <person name="Kawagashira N."/>
            <person name="Kawashima T."/>
            <person name="Kojima M."/>
            <person name="Kondo S."/>
            <person name="Konno H."/>
            <person name="Nakano K."/>
            <person name="Ninomiya N."/>
            <person name="Nishio T."/>
            <person name="Okada M."/>
            <person name="Plessy C."/>
            <person name="Shibata K."/>
            <person name="Shiraki T."/>
            <person name="Suzuki S."/>
            <person name="Tagami M."/>
            <person name="Waki K."/>
            <person name="Watahiki A."/>
            <person name="Okamura-Oho Y."/>
            <person name="Suzuki H."/>
            <person name="Kawai J."/>
            <person name="Hayashizaki Y."/>
        </authorList>
    </citation>
    <scope>NUCLEOTIDE SEQUENCE [LARGE SCALE MRNA]</scope>
    <source>
        <strain>C57BL/6J</strain>
        <strain>DBA/2J</strain>
    </source>
</reference>
<reference key="2">
    <citation type="journal article" date="2004" name="Genome Res.">
        <title>The status, quality, and expansion of the NIH full-length cDNA project: the Mammalian Gene Collection (MGC).</title>
        <authorList>
            <consortium name="The MGC Project Team"/>
        </authorList>
    </citation>
    <scope>NUCLEOTIDE SEQUENCE [LARGE SCALE MRNA]</scope>
    <source>
        <strain>Czech II</strain>
        <strain>FVB/N</strain>
        <tissue>Brain</tissue>
        <tissue>Kidney</tissue>
        <tissue>Mammary tumor</tissue>
    </source>
</reference>
<reference key="3">
    <citation type="journal article" date="2010" name="Cell">
        <title>A tissue-specific atlas of mouse protein phosphorylation and expression.</title>
        <authorList>
            <person name="Huttlin E.L."/>
            <person name="Jedrychowski M.P."/>
            <person name="Elias J.E."/>
            <person name="Goswami T."/>
            <person name="Rad R."/>
            <person name="Beausoleil S.A."/>
            <person name="Villen J."/>
            <person name="Haas W."/>
            <person name="Sowa M.E."/>
            <person name="Gygi S.P."/>
        </authorList>
    </citation>
    <scope>IDENTIFICATION BY MASS SPECTROMETRY [LARGE SCALE ANALYSIS]</scope>
    <source>
        <tissue>Brain</tissue>
        <tissue>Brown adipose tissue</tissue>
        <tissue>Kidney</tissue>
        <tissue>Liver</tissue>
        <tissue>Lung</tissue>
        <tissue>Pancreas</tissue>
        <tissue>Spleen</tissue>
        <tissue>Testis</tissue>
    </source>
</reference>
<feature type="initiator methionine" description="Removed" evidence="2">
    <location>
        <position position="1"/>
    </location>
</feature>
<feature type="chain" id="PRO_0000073998" description="DNA-directed RNA polymerases I, II, and III subunit RPABC3">
    <location>
        <begin position="2"/>
        <end position="150"/>
    </location>
</feature>
<feature type="region of interest" description="Non-specific ssDNA binding" evidence="1">
    <location>
        <begin position="16"/>
        <end position="40"/>
    </location>
</feature>
<feature type="modified residue" description="N-acetylalanine" evidence="2">
    <location>
        <position position="2"/>
    </location>
</feature>
<keyword id="KW-0007">Acetylation</keyword>
<keyword id="KW-0238">DNA-binding</keyword>
<keyword id="KW-0240">DNA-directed RNA polymerase</keyword>
<keyword id="KW-0539">Nucleus</keyword>
<keyword id="KW-1185">Reference proteome</keyword>
<keyword id="KW-0804">Transcription</keyword>
<name>RPAB3_MOUSE</name>
<evidence type="ECO:0000250" key="1"/>
<evidence type="ECO:0000250" key="2">
    <source>
        <dbReference type="UniProtKB" id="P52434"/>
    </source>
</evidence>
<evidence type="ECO:0000305" key="3"/>
<sequence>MAGILFEDIFDVKDIDPEGKKFDRVSRLHCESESFKMDLILDVNIQIYPVDLGDKFRLVIASTLYEDGTLDDGEYNPTDDRPSRADQFEYVMYGKVYRIEGDETSTEAATRLSAYVSYGGLLMRLQGDANNLHGFEVDSRVYLLMKKLAF</sequence>